<gene>
    <name type="primary">gshAB</name>
    <name type="synonym">gshF</name>
    <name type="ordered locus">lp_2336</name>
</gene>
<comment type="function">
    <text evidence="1">Synthesizes glutathione from L-glutamate and L-cysteine via gamma-L-glutamyl-L-cysteine.</text>
</comment>
<comment type="catalytic activity">
    <reaction>
        <text>L-cysteine + L-glutamate + ATP = gamma-L-glutamyl-L-cysteine + ADP + phosphate + H(+)</text>
        <dbReference type="Rhea" id="RHEA:13285"/>
        <dbReference type="ChEBI" id="CHEBI:15378"/>
        <dbReference type="ChEBI" id="CHEBI:29985"/>
        <dbReference type="ChEBI" id="CHEBI:30616"/>
        <dbReference type="ChEBI" id="CHEBI:35235"/>
        <dbReference type="ChEBI" id="CHEBI:43474"/>
        <dbReference type="ChEBI" id="CHEBI:58173"/>
        <dbReference type="ChEBI" id="CHEBI:456216"/>
        <dbReference type="EC" id="6.3.2.2"/>
    </reaction>
</comment>
<comment type="catalytic activity">
    <reaction>
        <text>gamma-L-glutamyl-L-cysteine + glycine + ATP = glutathione + ADP + phosphate + H(+)</text>
        <dbReference type="Rhea" id="RHEA:13557"/>
        <dbReference type="ChEBI" id="CHEBI:15378"/>
        <dbReference type="ChEBI" id="CHEBI:30616"/>
        <dbReference type="ChEBI" id="CHEBI:43474"/>
        <dbReference type="ChEBI" id="CHEBI:57305"/>
        <dbReference type="ChEBI" id="CHEBI:57925"/>
        <dbReference type="ChEBI" id="CHEBI:58173"/>
        <dbReference type="ChEBI" id="CHEBI:456216"/>
        <dbReference type="EC" id="6.3.2.3"/>
    </reaction>
</comment>
<comment type="pathway">
    <text>Sulfur metabolism; glutathione biosynthesis; glutathione from L-cysteine and L-glutamate: step 1/2.</text>
</comment>
<comment type="pathway">
    <text>Sulfur metabolism; glutathione biosynthesis; glutathione from L-cysteine and L-glutamate: step 2/2.</text>
</comment>
<comment type="subunit">
    <text evidence="1">Monomer.</text>
</comment>
<comment type="similarity">
    <text evidence="2">In the N-terminal section; belongs to the glutamate--cysteine ligase type 1 family. Type 2 subfamily.</text>
</comment>
<evidence type="ECO:0000250" key="1"/>
<evidence type="ECO:0000305" key="2"/>
<feature type="chain" id="PRO_0000192552" description="Glutathione biosynthesis bifunctional protein GshAB">
    <location>
        <begin position="1"/>
        <end position="751"/>
    </location>
</feature>
<feature type="region of interest" description="Glutamate--cysteine ligase">
    <location>
        <begin position="1"/>
        <end position="336"/>
    </location>
</feature>
<keyword id="KW-0067">ATP-binding</keyword>
<keyword id="KW-0317">Glutathione biosynthesis</keyword>
<keyword id="KW-0436">Ligase</keyword>
<keyword id="KW-0511">Multifunctional enzyme</keyword>
<keyword id="KW-0547">Nucleotide-binding</keyword>
<keyword id="KW-1185">Reference proteome</keyword>
<sequence length="751" mass="83018">MELDAVGKAIVQYHLVPLVHQANLGLEVTMHRVDAHGHLATTAHPQAFGSAQQNHQLRPGFSASALKFTTPVRRDIPALMAYLKGLNTAARRSLDADERLWPLSSTPVLPDDLTNVPLADVDQVSYQRRRDLARKYELQRLMTTGSHVNMSLNEALFTRLYTETFHQQYHSYVDFRNAIYLKVAQGLVRMNWLIQYLFGASPRLAVTDTTSRPQRSSVQHPDGRYSQVTGDYTSIDRYVAKLTAAVRQQQLLSVNDFDGPVRLRSNGQLAMMARQGVYYLEYRGLDLDPTSPVGVDANAVAFVRLLASYFVMMPALPAKMVSQVNAQADQLTRQVLGENPTTASAQAVPAVQVLDALADFVKTYGLPNEDAVLLKQLKSWVTDPKKTLSAQIAMQADPLAWALERAARYQESSNERPFELAGFTALDLSSQQLAQQALTRGVQVDVVDPHANILRLTKLGRSQLVVNGSGTDLNPQALTTVLTHKAAAKQILAEHGVPVPASQTYHTANQLIADYDRYVQAGGIVLKAADESHKVIVFRIMPERGLFEQVVRQLFEQTSAVMAEEVVVASSYRFLVIDSRVQAIVERIPANIVGDGRSTVKTLLDRKNGRALRGTAFKWPQSALQLGTIERYRLDSYHLTLDSVVSRGTQILLREDATFGNGADVLDATADMHQSYVQAVEKLVADLHLAVAGVDVMIPNLYAELVPEHPEMAVYLGIHAAPYLYPHLFPMFGTAQPVAGQLLDALFKNED</sequence>
<proteinExistence type="inferred from homology"/>
<name>GSHAB_LACPL</name>
<protein>
    <recommendedName>
        <fullName>Glutathione biosynthesis bifunctional protein GshAB</fullName>
    </recommendedName>
    <alternativeName>
        <fullName>Gamma-GCS-GS</fullName>
        <shortName>GCS-GS</shortName>
    </alternativeName>
    <domain>
        <recommendedName>
            <fullName>Glutamate--cysteine ligase</fullName>
            <ecNumber>6.3.2.2</ecNumber>
        </recommendedName>
        <alternativeName>
            <fullName>Gamma-ECS</fullName>
            <shortName>GCS</shortName>
        </alternativeName>
        <alternativeName>
            <fullName>Gamma-glutamylcysteine synthetase</fullName>
        </alternativeName>
    </domain>
    <domain>
        <recommendedName>
            <fullName>Glutathione synthetase</fullName>
            <ecNumber>6.3.2.3</ecNumber>
        </recommendedName>
        <alternativeName>
            <fullName>GSH synthetase</fullName>
            <shortName>GS</shortName>
            <shortName>GSH-S</shortName>
            <shortName>GSHase</shortName>
        </alternativeName>
        <alternativeName>
            <fullName>Glutathione synthase</fullName>
        </alternativeName>
    </domain>
</protein>
<dbReference type="EC" id="6.3.2.2"/>
<dbReference type="EC" id="6.3.2.3"/>
<dbReference type="EMBL" id="AL935263">
    <property type="protein sequence ID" value="CCC79530.1"/>
    <property type="molecule type" value="Genomic_DNA"/>
</dbReference>
<dbReference type="RefSeq" id="WP_011101718.1">
    <property type="nucleotide sequence ID" value="NC_004567.2"/>
</dbReference>
<dbReference type="RefSeq" id="YP_004890044.1">
    <property type="nucleotide sequence ID" value="NC_004567.2"/>
</dbReference>
<dbReference type="SMR" id="Q88UW5"/>
<dbReference type="STRING" id="220668.lp_2336"/>
<dbReference type="EnsemblBacteria" id="CCC79530">
    <property type="protein sequence ID" value="CCC79530"/>
    <property type="gene ID" value="lp_2336"/>
</dbReference>
<dbReference type="KEGG" id="lpl:lp_2336"/>
<dbReference type="PATRIC" id="fig|220668.9.peg.1975"/>
<dbReference type="eggNOG" id="COG0189">
    <property type="taxonomic scope" value="Bacteria"/>
</dbReference>
<dbReference type="eggNOG" id="COG2918">
    <property type="taxonomic scope" value="Bacteria"/>
</dbReference>
<dbReference type="HOGENOM" id="CLU_020728_1_0_9"/>
<dbReference type="OrthoDB" id="9803907at2"/>
<dbReference type="PhylomeDB" id="Q88UW5"/>
<dbReference type="UniPathway" id="UPA00142">
    <property type="reaction ID" value="UER00209"/>
</dbReference>
<dbReference type="UniPathway" id="UPA00142">
    <property type="reaction ID" value="UER00210"/>
</dbReference>
<dbReference type="Proteomes" id="UP000000432">
    <property type="component" value="Chromosome"/>
</dbReference>
<dbReference type="GO" id="GO:0005829">
    <property type="term" value="C:cytosol"/>
    <property type="evidence" value="ECO:0007669"/>
    <property type="project" value="TreeGrafter"/>
</dbReference>
<dbReference type="GO" id="GO:0005524">
    <property type="term" value="F:ATP binding"/>
    <property type="evidence" value="ECO:0007669"/>
    <property type="project" value="UniProtKB-KW"/>
</dbReference>
<dbReference type="GO" id="GO:0004357">
    <property type="term" value="F:glutamate-cysteine ligase activity"/>
    <property type="evidence" value="ECO:0007669"/>
    <property type="project" value="UniProtKB-EC"/>
</dbReference>
<dbReference type="GO" id="GO:0004363">
    <property type="term" value="F:glutathione synthase activity"/>
    <property type="evidence" value="ECO:0007669"/>
    <property type="project" value="UniProtKB-EC"/>
</dbReference>
<dbReference type="GO" id="GO:0046872">
    <property type="term" value="F:metal ion binding"/>
    <property type="evidence" value="ECO:0007669"/>
    <property type="project" value="TreeGrafter"/>
</dbReference>
<dbReference type="Gene3D" id="3.30.590.20">
    <property type="match status" value="1"/>
</dbReference>
<dbReference type="Gene3D" id="3.30.1490.20">
    <property type="entry name" value="ATP-grasp fold, A domain"/>
    <property type="match status" value="1"/>
</dbReference>
<dbReference type="Gene3D" id="3.30.470.20">
    <property type="entry name" value="ATP-grasp fold, B domain"/>
    <property type="match status" value="1"/>
</dbReference>
<dbReference type="InterPro" id="IPR013815">
    <property type="entry name" value="ATP_grasp_subdomain_1"/>
</dbReference>
<dbReference type="InterPro" id="IPR014746">
    <property type="entry name" value="Gln_synth/guanido_kin_cat_dom"/>
</dbReference>
<dbReference type="InterPro" id="IPR007370">
    <property type="entry name" value="Glu_cys_ligase"/>
</dbReference>
<dbReference type="InterPro" id="IPR006334">
    <property type="entry name" value="Glut_cys_ligase"/>
</dbReference>
<dbReference type="InterPro" id="IPR040657">
    <property type="entry name" value="GshAB_ATP-grasp"/>
</dbReference>
<dbReference type="NCBIfam" id="NF002688">
    <property type="entry name" value="PRK02471.1"/>
    <property type="match status" value="1"/>
</dbReference>
<dbReference type="PANTHER" id="PTHR38761">
    <property type="entry name" value="GLUTAMATE--CYSTEINE LIGASE"/>
    <property type="match status" value="1"/>
</dbReference>
<dbReference type="PANTHER" id="PTHR38761:SF1">
    <property type="entry name" value="GLUTAMATE--CYSTEINE LIGASE"/>
    <property type="match status" value="1"/>
</dbReference>
<dbReference type="Pfam" id="PF18419">
    <property type="entry name" value="ATP-grasp_6"/>
    <property type="match status" value="1"/>
</dbReference>
<dbReference type="Pfam" id="PF04262">
    <property type="entry name" value="Glu_cys_ligase"/>
    <property type="match status" value="2"/>
</dbReference>
<dbReference type="SUPFAM" id="SSF55931">
    <property type="entry name" value="Glutamine synthetase/guanido kinase"/>
    <property type="match status" value="1"/>
</dbReference>
<dbReference type="SUPFAM" id="SSF56059">
    <property type="entry name" value="Glutathione synthetase ATP-binding domain-like"/>
    <property type="match status" value="1"/>
</dbReference>
<accession>Q88UW5</accession>
<accession>F9UQP1</accession>
<reference key="1">
    <citation type="journal article" date="2003" name="Proc. Natl. Acad. Sci. U.S.A.">
        <title>Complete genome sequence of Lactobacillus plantarum WCFS1.</title>
        <authorList>
            <person name="Kleerebezem M."/>
            <person name="Boekhorst J."/>
            <person name="van Kranenburg R."/>
            <person name="Molenaar D."/>
            <person name="Kuipers O.P."/>
            <person name="Leer R."/>
            <person name="Tarchini R."/>
            <person name="Peters S.A."/>
            <person name="Sandbrink H.M."/>
            <person name="Fiers M.W.E.J."/>
            <person name="Stiekema W."/>
            <person name="Klein Lankhorst R.M."/>
            <person name="Bron P.A."/>
            <person name="Hoffer S.M."/>
            <person name="Nierop Groot M.N."/>
            <person name="Kerkhoven R."/>
            <person name="De Vries M."/>
            <person name="Ursing B."/>
            <person name="De Vos W.M."/>
            <person name="Siezen R.J."/>
        </authorList>
    </citation>
    <scope>NUCLEOTIDE SEQUENCE [LARGE SCALE GENOMIC DNA]</scope>
    <source>
        <strain>ATCC BAA-793 / NCIMB 8826 / WCFS1</strain>
    </source>
</reference>
<reference key="2">
    <citation type="journal article" date="2012" name="J. Bacteriol.">
        <title>Complete resequencing and reannotation of the Lactobacillus plantarum WCFS1 genome.</title>
        <authorList>
            <person name="Siezen R.J."/>
            <person name="Francke C."/>
            <person name="Renckens B."/>
            <person name="Boekhorst J."/>
            <person name="Wels M."/>
            <person name="Kleerebezem M."/>
            <person name="van Hijum S.A."/>
        </authorList>
    </citation>
    <scope>NUCLEOTIDE SEQUENCE [LARGE SCALE GENOMIC DNA]</scope>
    <scope>GENOME REANNOTATION</scope>
    <source>
        <strain>ATCC BAA-793 / NCIMB 8826 / WCFS1</strain>
    </source>
</reference>
<organism>
    <name type="scientific">Lactiplantibacillus plantarum (strain ATCC BAA-793 / NCIMB 8826 / WCFS1)</name>
    <name type="common">Lactobacillus plantarum</name>
    <dbReference type="NCBI Taxonomy" id="220668"/>
    <lineage>
        <taxon>Bacteria</taxon>
        <taxon>Bacillati</taxon>
        <taxon>Bacillota</taxon>
        <taxon>Bacilli</taxon>
        <taxon>Lactobacillales</taxon>
        <taxon>Lactobacillaceae</taxon>
        <taxon>Lactiplantibacillus</taxon>
    </lineage>
</organism>